<sequence length="227" mass="24746">MTAIAPVITIDGPSGAGKGTLCKAMAEALQWHLLDSGAIYRVLALAALHHHVDVASEDALVPLASHLDVRFVSTNGNLEVILEGEDVSGEIRTQEVANAASQVAAFPRVREALLRRQRAFRELPGLIADGRDMGTVVFPDAPVKIFLDASSEERAHRRMLQLQEKGFSVNFERLLAEIKERDDRDRNRAVAPLVPAADALVLDSTTLSIEQVIEKALQYARQKLALA</sequence>
<reference key="1">
    <citation type="journal article" date="2008" name="J. Bacteriol.">
        <title>The pangenome structure of Escherichia coli: comparative genomic analysis of E. coli commensal and pathogenic isolates.</title>
        <authorList>
            <person name="Rasko D.A."/>
            <person name="Rosovitz M.J."/>
            <person name="Myers G.S.A."/>
            <person name="Mongodin E.F."/>
            <person name="Fricke W.F."/>
            <person name="Gajer P."/>
            <person name="Crabtree J."/>
            <person name="Sebaihia M."/>
            <person name="Thomson N.R."/>
            <person name="Chaudhuri R."/>
            <person name="Henderson I.R."/>
            <person name="Sperandio V."/>
            <person name="Ravel J."/>
        </authorList>
    </citation>
    <scope>NUCLEOTIDE SEQUENCE [LARGE SCALE GENOMIC DNA]</scope>
    <source>
        <strain>HS</strain>
    </source>
</reference>
<name>KCY_ECOHS</name>
<keyword id="KW-0067">ATP-binding</keyword>
<keyword id="KW-0963">Cytoplasm</keyword>
<keyword id="KW-0418">Kinase</keyword>
<keyword id="KW-0547">Nucleotide-binding</keyword>
<keyword id="KW-0808">Transferase</keyword>
<evidence type="ECO:0000255" key="1">
    <source>
        <dbReference type="HAMAP-Rule" id="MF_00238"/>
    </source>
</evidence>
<proteinExistence type="inferred from homology"/>
<gene>
    <name evidence="1" type="primary">cmk</name>
    <name type="ordered locus">EcHS_A1016</name>
</gene>
<feature type="chain" id="PRO_1000058977" description="Cytidylate kinase">
    <location>
        <begin position="1"/>
        <end position="227"/>
    </location>
</feature>
<feature type="binding site" evidence="1">
    <location>
        <begin position="12"/>
        <end position="20"/>
    </location>
    <ligand>
        <name>ATP</name>
        <dbReference type="ChEBI" id="CHEBI:30616"/>
    </ligand>
</feature>
<comment type="catalytic activity">
    <reaction evidence="1">
        <text>CMP + ATP = CDP + ADP</text>
        <dbReference type="Rhea" id="RHEA:11600"/>
        <dbReference type="ChEBI" id="CHEBI:30616"/>
        <dbReference type="ChEBI" id="CHEBI:58069"/>
        <dbReference type="ChEBI" id="CHEBI:60377"/>
        <dbReference type="ChEBI" id="CHEBI:456216"/>
        <dbReference type="EC" id="2.7.4.25"/>
    </reaction>
</comment>
<comment type="catalytic activity">
    <reaction evidence="1">
        <text>dCMP + ATP = dCDP + ADP</text>
        <dbReference type="Rhea" id="RHEA:25094"/>
        <dbReference type="ChEBI" id="CHEBI:30616"/>
        <dbReference type="ChEBI" id="CHEBI:57566"/>
        <dbReference type="ChEBI" id="CHEBI:58593"/>
        <dbReference type="ChEBI" id="CHEBI:456216"/>
        <dbReference type="EC" id="2.7.4.25"/>
    </reaction>
</comment>
<comment type="subcellular location">
    <subcellularLocation>
        <location evidence="1">Cytoplasm</location>
    </subcellularLocation>
</comment>
<comment type="similarity">
    <text evidence="1">Belongs to the cytidylate kinase family. Type 1 subfamily.</text>
</comment>
<accession>A7ZYL3</accession>
<protein>
    <recommendedName>
        <fullName evidence="1">Cytidylate kinase</fullName>
        <shortName evidence="1">CK</shortName>
        <ecNumber evidence="1">2.7.4.25</ecNumber>
    </recommendedName>
    <alternativeName>
        <fullName evidence="1">Cytidine monophosphate kinase</fullName>
        <shortName evidence="1">CMP kinase</shortName>
    </alternativeName>
</protein>
<organism>
    <name type="scientific">Escherichia coli O9:H4 (strain HS)</name>
    <dbReference type="NCBI Taxonomy" id="331112"/>
    <lineage>
        <taxon>Bacteria</taxon>
        <taxon>Pseudomonadati</taxon>
        <taxon>Pseudomonadota</taxon>
        <taxon>Gammaproteobacteria</taxon>
        <taxon>Enterobacterales</taxon>
        <taxon>Enterobacteriaceae</taxon>
        <taxon>Escherichia</taxon>
    </lineage>
</organism>
<dbReference type="EC" id="2.7.4.25" evidence="1"/>
<dbReference type="EMBL" id="CP000802">
    <property type="protein sequence ID" value="ABV05367.1"/>
    <property type="molecule type" value="Genomic_DNA"/>
</dbReference>
<dbReference type="RefSeq" id="WP_000125016.1">
    <property type="nucleotide sequence ID" value="NC_009800.1"/>
</dbReference>
<dbReference type="SMR" id="A7ZYL3"/>
<dbReference type="GeneID" id="93776507"/>
<dbReference type="KEGG" id="ecx:EcHS_A1016"/>
<dbReference type="HOGENOM" id="CLU_079959_0_2_6"/>
<dbReference type="GO" id="GO:0005829">
    <property type="term" value="C:cytosol"/>
    <property type="evidence" value="ECO:0007669"/>
    <property type="project" value="TreeGrafter"/>
</dbReference>
<dbReference type="GO" id="GO:0005524">
    <property type="term" value="F:ATP binding"/>
    <property type="evidence" value="ECO:0007669"/>
    <property type="project" value="UniProtKB-UniRule"/>
</dbReference>
<dbReference type="GO" id="GO:0036430">
    <property type="term" value="F:CMP kinase activity"/>
    <property type="evidence" value="ECO:0007669"/>
    <property type="project" value="RHEA"/>
</dbReference>
<dbReference type="GO" id="GO:0036431">
    <property type="term" value="F:dCMP kinase activity"/>
    <property type="evidence" value="ECO:0007669"/>
    <property type="project" value="RHEA"/>
</dbReference>
<dbReference type="GO" id="GO:0015949">
    <property type="term" value="P:nucleobase-containing small molecule interconversion"/>
    <property type="evidence" value="ECO:0007669"/>
    <property type="project" value="TreeGrafter"/>
</dbReference>
<dbReference type="GO" id="GO:0006220">
    <property type="term" value="P:pyrimidine nucleotide metabolic process"/>
    <property type="evidence" value="ECO:0007669"/>
    <property type="project" value="UniProtKB-UniRule"/>
</dbReference>
<dbReference type="CDD" id="cd02020">
    <property type="entry name" value="CMPK"/>
    <property type="match status" value="1"/>
</dbReference>
<dbReference type="FunFam" id="3.40.50.300:FF:000262">
    <property type="entry name" value="Cytidylate kinase"/>
    <property type="match status" value="1"/>
</dbReference>
<dbReference type="Gene3D" id="3.40.50.300">
    <property type="entry name" value="P-loop containing nucleotide triphosphate hydrolases"/>
    <property type="match status" value="1"/>
</dbReference>
<dbReference type="HAMAP" id="MF_00238">
    <property type="entry name" value="Cytidyl_kinase_type1"/>
    <property type="match status" value="1"/>
</dbReference>
<dbReference type="InterPro" id="IPR003136">
    <property type="entry name" value="Cytidylate_kin"/>
</dbReference>
<dbReference type="InterPro" id="IPR011994">
    <property type="entry name" value="Cytidylate_kinase_dom"/>
</dbReference>
<dbReference type="InterPro" id="IPR027417">
    <property type="entry name" value="P-loop_NTPase"/>
</dbReference>
<dbReference type="NCBIfam" id="TIGR00017">
    <property type="entry name" value="cmk"/>
    <property type="match status" value="1"/>
</dbReference>
<dbReference type="PANTHER" id="PTHR21299:SF2">
    <property type="entry name" value="CYTIDYLATE KINASE"/>
    <property type="match status" value="1"/>
</dbReference>
<dbReference type="PANTHER" id="PTHR21299">
    <property type="entry name" value="CYTIDYLATE KINASE/PANTOATE-BETA-ALANINE LIGASE"/>
    <property type="match status" value="1"/>
</dbReference>
<dbReference type="Pfam" id="PF02224">
    <property type="entry name" value="Cytidylate_kin"/>
    <property type="match status" value="1"/>
</dbReference>
<dbReference type="SUPFAM" id="SSF52540">
    <property type="entry name" value="P-loop containing nucleoside triphosphate hydrolases"/>
    <property type="match status" value="1"/>
</dbReference>